<accession>Q92H24</accession>
<reference key="1">
    <citation type="journal article" date="2001" name="Science">
        <title>Mechanisms of evolution in Rickettsia conorii and R. prowazekii.</title>
        <authorList>
            <person name="Ogata H."/>
            <person name="Audic S."/>
            <person name="Renesto-Audiffren P."/>
            <person name="Fournier P.-E."/>
            <person name="Barbe V."/>
            <person name="Samson D."/>
            <person name="Roux V."/>
            <person name="Cossart P."/>
            <person name="Weissenbach J."/>
            <person name="Claverie J.-M."/>
            <person name="Raoult D."/>
        </authorList>
    </citation>
    <scope>NUCLEOTIDE SEQUENCE [LARGE SCALE GENOMIC DNA]</scope>
    <source>
        <strain>ATCC VR-613 / Malish 7</strain>
    </source>
</reference>
<keyword id="KW-0067">ATP-binding</keyword>
<keyword id="KW-1003">Cell membrane</keyword>
<keyword id="KW-0418">Kinase</keyword>
<keyword id="KW-0472">Membrane</keyword>
<keyword id="KW-0547">Nucleotide-binding</keyword>
<keyword id="KW-0597">Phosphoprotein</keyword>
<keyword id="KW-0808">Transferase</keyword>
<keyword id="KW-0812">Transmembrane</keyword>
<keyword id="KW-1133">Transmembrane helix</keyword>
<keyword id="KW-0902">Two-component regulatory system</keyword>
<evidence type="ECO:0000250" key="1"/>
<evidence type="ECO:0000255" key="2"/>
<evidence type="ECO:0000255" key="3">
    <source>
        <dbReference type="PROSITE-ProRule" id="PRU00102"/>
    </source>
</evidence>
<evidence type="ECO:0000255" key="4">
    <source>
        <dbReference type="PROSITE-ProRule" id="PRU00107"/>
    </source>
</evidence>
<evidence type="ECO:0000305" key="5"/>
<gene>
    <name type="ordered locus">RC0948</name>
</gene>
<organism>
    <name type="scientific">Rickettsia conorii (strain ATCC VR-613 / Malish 7)</name>
    <dbReference type="NCBI Taxonomy" id="272944"/>
    <lineage>
        <taxon>Bacteria</taxon>
        <taxon>Pseudomonadati</taxon>
        <taxon>Pseudomonadota</taxon>
        <taxon>Alphaproteobacteria</taxon>
        <taxon>Rickettsiales</taxon>
        <taxon>Rickettsiaceae</taxon>
        <taxon>Rickettsieae</taxon>
        <taxon>Rickettsia</taxon>
        <taxon>spotted fever group</taxon>
    </lineage>
</organism>
<name>NTRYL_RICCN</name>
<proteinExistence type="inferred from homology"/>
<sequence length="599" mass="67493">MLSYLKQNLHSYFSSRVLIFTLATAAIIFACATFYVISLESKNFSTIIGFLLVDLAIFLILGVVLTQKFFTKNNNNDSSKLQNRIVIAFSLVAAIPTIIVSVFSVYFFNLSVQAWFDKKISTVLDQSVIVAESYIAEHKLQLKETALAVAEDLSDMYYDLIHNPALFTKTLNTEAEMRSLDEAIVLNKSTNTIVANSYLSFSLSFATIPAHLIKKADLGELVEVKSDPTKIRMLIKLKEYNDVYLLVGRLVDNKIIDHVDATNGAAAEYNSLKNEIDNIQIKFSIMFIFIALLLLFVAISFGVIFTAKIVKPIKKLVTATDNVKDGDLTVQVPENEVDKDEIGTLYVAFNRMIKQLSRQQRDLVIAQRAMAWSDVAKKVAHEIKNPLTPILLASERLLKKFSPEIKERVEFENYLKMIIRHTNDIKNIVSEFVLFARLPAPKFTKSELVYLVKHIVEARKLLNDHILYKFESNVEQFDFMCDATQINQVMINLLKNAEESIEGRESGKIEVTIDVKDDFISVIVTDNGKGFPPELIGKATESYVTTSSKGMGVGLAIVKRIVEEHCGILDIANREAEGAIIDIKFDLKELDLKAKRLEM</sequence>
<feature type="chain" id="PRO_0000282373" description="Putative sensor histidine kinase NtrY-like">
    <location>
        <begin position="1"/>
        <end position="599"/>
    </location>
</feature>
<feature type="transmembrane region" description="Helical" evidence="2">
    <location>
        <begin position="17"/>
        <end position="37"/>
    </location>
</feature>
<feature type="transmembrane region" description="Helical" evidence="2">
    <location>
        <begin position="44"/>
        <end position="64"/>
    </location>
</feature>
<feature type="transmembrane region" description="Helical" evidence="2">
    <location>
        <begin position="85"/>
        <end position="105"/>
    </location>
</feature>
<feature type="transmembrane region" description="Helical" evidence="2">
    <location>
        <begin position="285"/>
        <end position="305"/>
    </location>
</feature>
<feature type="domain" description="HAMP" evidence="3">
    <location>
        <begin position="307"/>
        <end position="361"/>
    </location>
</feature>
<feature type="domain" description="Histidine kinase" evidence="4">
    <location>
        <begin position="378"/>
        <end position="589"/>
    </location>
</feature>
<feature type="modified residue" description="Phosphohistidine; by autocatalysis" evidence="4">
    <location>
        <position position="381"/>
    </location>
</feature>
<protein>
    <recommendedName>
        <fullName>Putative sensor histidine kinase NtrY-like</fullName>
        <ecNumber>2.7.13.3</ecNumber>
    </recommendedName>
</protein>
<dbReference type="EC" id="2.7.13.3"/>
<dbReference type="EMBL" id="AE006914">
    <property type="protein sequence ID" value="AAL03486.1"/>
    <property type="molecule type" value="Genomic_DNA"/>
</dbReference>
<dbReference type="PIR" id="D97818">
    <property type="entry name" value="D97818"/>
</dbReference>
<dbReference type="RefSeq" id="WP_010977545.1">
    <property type="nucleotide sequence ID" value="NC_003103.1"/>
</dbReference>
<dbReference type="SMR" id="Q92H24"/>
<dbReference type="GeneID" id="927770"/>
<dbReference type="KEGG" id="rco:RC0948"/>
<dbReference type="HOGENOM" id="CLU_019564_1_0_5"/>
<dbReference type="Proteomes" id="UP000000816">
    <property type="component" value="Chromosome"/>
</dbReference>
<dbReference type="GO" id="GO:0005886">
    <property type="term" value="C:plasma membrane"/>
    <property type="evidence" value="ECO:0007669"/>
    <property type="project" value="UniProtKB-SubCell"/>
</dbReference>
<dbReference type="GO" id="GO:0005524">
    <property type="term" value="F:ATP binding"/>
    <property type="evidence" value="ECO:0007669"/>
    <property type="project" value="UniProtKB-KW"/>
</dbReference>
<dbReference type="GO" id="GO:0000155">
    <property type="term" value="F:phosphorelay sensor kinase activity"/>
    <property type="evidence" value="ECO:0007669"/>
    <property type="project" value="InterPro"/>
</dbReference>
<dbReference type="CDD" id="cd06225">
    <property type="entry name" value="HAMP"/>
    <property type="match status" value="1"/>
</dbReference>
<dbReference type="CDD" id="cd16944">
    <property type="entry name" value="HATPase_NtrY-like"/>
    <property type="match status" value="1"/>
</dbReference>
<dbReference type="CDD" id="cd00082">
    <property type="entry name" value="HisKA"/>
    <property type="match status" value="1"/>
</dbReference>
<dbReference type="Gene3D" id="1.10.287.130">
    <property type="match status" value="1"/>
</dbReference>
<dbReference type="Gene3D" id="6.10.340.10">
    <property type="match status" value="1"/>
</dbReference>
<dbReference type="Gene3D" id="3.30.565.10">
    <property type="entry name" value="Histidine kinase-like ATPase, C-terminal domain"/>
    <property type="match status" value="1"/>
</dbReference>
<dbReference type="InterPro" id="IPR050398">
    <property type="entry name" value="Bact_Sensor_His_Kinase"/>
</dbReference>
<dbReference type="InterPro" id="IPR003660">
    <property type="entry name" value="HAMP_dom"/>
</dbReference>
<dbReference type="InterPro" id="IPR036890">
    <property type="entry name" value="HATPase_C_sf"/>
</dbReference>
<dbReference type="InterPro" id="IPR005467">
    <property type="entry name" value="His_kinase_dom"/>
</dbReference>
<dbReference type="InterPro" id="IPR003661">
    <property type="entry name" value="HisK_dim/P_dom"/>
</dbReference>
<dbReference type="InterPro" id="IPR036097">
    <property type="entry name" value="HisK_dim/P_sf"/>
</dbReference>
<dbReference type="InterPro" id="IPR045671">
    <property type="entry name" value="NtrY-like_N"/>
</dbReference>
<dbReference type="InterPro" id="IPR004358">
    <property type="entry name" value="Sig_transdc_His_kin-like_C"/>
</dbReference>
<dbReference type="PANTHER" id="PTHR45528">
    <property type="entry name" value="SENSOR HISTIDINE KINASE CPXA"/>
    <property type="match status" value="1"/>
</dbReference>
<dbReference type="PANTHER" id="PTHR45528:SF1">
    <property type="entry name" value="SENSOR HISTIDINE KINASE CPXA"/>
    <property type="match status" value="1"/>
</dbReference>
<dbReference type="Pfam" id="PF00672">
    <property type="entry name" value="HAMP"/>
    <property type="match status" value="1"/>
</dbReference>
<dbReference type="Pfam" id="PF02518">
    <property type="entry name" value="HATPase_c"/>
    <property type="match status" value="1"/>
</dbReference>
<dbReference type="Pfam" id="PF00512">
    <property type="entry name" value="HisKA"/>
    <property type="match status" value="1"/>
</dbReference>
<dbReference type="Pfam" id="PF19312">
    <property type="entry name" value="NtrY_N"/>
    <property type="match status" value="1"/>
</dbReference>
<dbReference type="PRINTS" id="PR00344">
    <property type="entry name" value="BCTRLSENSOR"/>
</dbReference>
<dbReference type="SMART" id="SM00304">
    <property type="entry name" value="HAMP"/>
    <property type="match status" value="1"/>
</dbReference>
<dbReference type="SMART" id="SM00387">
    <property type="entry name" value="HATPase_c"/>
    <property type="match status" value="1"/>
</dbReference>
<dbReference type="SMART" id="SM00388">
    <property type="entry name" value="HisKA"/>
    <property type="match status" value="1"/>
</dbReference>
<dbReference type="SUPFAM" id="SSF55874">
    <property type="entry name" value="ATPase domain of HSP90 chaperone/DNA topoisomerase II/histidine kinase"/>
    <property type="match status" value="1"/>
</dbReference>
<dbReference type="SUPFAM" id="SSF158472">
    <property type="entry name" value="HAMP domain-like"/>
    <property type="match status" value="1"/>
</dbReference>
<dbReference type="SUPFAM" id="SSF47384">
    <property type="entry name" value="Homodimeric domain of signal transducing histidine kinase"/>
    <property type="match status" value="1"/>
</dbReference>
<dbReference type="PROSITE" id="PS50885">
    <property type="entry name" value="HAMP"/>
    <property type="match status" value="1"/>
</dbReference>
<dbReference type="PROSITE" id="PS50109">
    <property type="entry name" value="HIS_KIN"/>
    <property type="match status" value="1"/>
</dbReference>
<comment type="function">
    <text evidence="1">Member of the two-component regulatory system RC0948/RC0849.</text>
</comment>
<comment type="catalytic activity">
    <reaction>
        <text>ATP + protein L-histidine = ADP + protein N-phospho-L-histidine.</text>
        <dbReference type="EC" id="2.7.13.3"/>
    </reaction>
</comment>
<comment type="subcellular location">
    <subcellularLocation>
        <location evidence="5">Cell membrane</location>
        <topology evidence="5">Multi-pass membrane protein</topology>
    </subcellularLocation>
</comment>